<reference key="1">
    <citation type="submission" date="2005-12" db="EMBL/GenBank/DDBJ databases">
        <title>The NIAID influenza genome sequencing project.</title>
        <authorList>
            <person name="Ghedin E."/>
            <person name="Spiro D."/>
            <person name="Miller N."/>
            <person name="Zaborsky J."/>
            <person name="Feldblyum T."/>
            <person name="Subbu V."/>
            <person name="Shumway M."/>
            <person name="Sparenborg J."/>
            <person name="Groveman L."/>
            <person name="Halpin R."/>
            <person name="Sitz J."/>
            <person name="Koo H."/>
            <person name="Salzberg S.L."/>
            <person name="Webster R.G."/>
            <person name="Hoffmann E."/>
            <person name="Krauss S."/>
            <person name="Naeve C."/>
            <person name="Bao Y."/>
            <person name="Bolotov P."/>
            <person name="Dernovoy D."/>
            <person name="Kiryutin B."/>
            <person name="Lipman D.J."/>
            <person name="Tatusova T."/>
        </authorList>
    </citation>
    <scope>NUCLEOTIDE SEQUENCE [GENOMIC RNA]</scope>
</reference>
<comment type="function">
    <text evidence="1">Binds to sialic acid-containing receptors on the cell surface, bringing about the attachment of the virus particle to the cell. This attachment induces virion internalization either through clathrin-dependent endocytosis or through clathrin- and caveolin-independent pathway. Plays a major role in the determination of host range restriction and virulence. Class I viral fusion protein. Responsible for penetration of the virus into the cell cytoplasm by mediating the fusion of the membrane of the endocytosed virus particle with the endosomal membrane. Low pH in endosomes induces an irreversible conformational change in HA2, releasing the fusion hydrophobic peptide. Several trimers are required to form a competent fusion pore.</text>
</comment>
<comment type="subunit">
    <text evidence="1">Homotrimer of disulfide-linked HA1-HA2.</text>
</comment>
<comment type="subcellular location">
    <subcellularLocation>
        <location evidence="1">Virion membrane</location>
        <topology evidence="1">Single-pass type I membrane protein</topology>
    </subcellularLocation>
    <subcellularLocation>
        <location evidence="1">Host apical cell membrane</location>
        <topology evidence="1">Single-pass type I membrane protein</topology>
    </subcellularLocation>
    <text evidence="1">Targeted to the apical plasma membrane in epithelial polarized cells through a signal present in the transmembrane domain. Associated with glycosphingolipid- and cholesterol-enriched detergent-resistant lipid rafts.</text>
</comment>
<comment type="PTM">
    <text evidence="1">Palmitoylated.</text>
</comment>
<comment type="PTM">
    <text evidence="1">In natural infection, inactive HA is matured into HA1 and HA2 outside the cell by one or more trypsin-like, arginine-specific endoprotease secreted by the bronchial epithelial cells. One identified protease that may be involved in this process is secreted in lungs by club cells.</text>
</comment>
<comment type="miscellaneous">
    <text>Major glycoprotein, comprises over 80% of the envelope proteins present in virus particle.</text>
</comment>
<comment type="miscellaneous">
    <text>The extent of infection into host organism is determined by HA. Influenza viruses bud from the apical surface of polarized epithelial cells (e.g. bronchial epithelial cells) into lumen of lungs and are therefore usually pneumotropic. The reason is that HA is cleaved by tryptase clara which is restricted to lungs. However, HAs of H5 and H7 pantropic avian viruses subtypes can be cleaved by furin and subtilisin-type enzymes, allowing the virus to grow in other organs than lungs.</text>
</comment>
<comment type="miscellaneous">
    <text evidence="2">The influenza A genome consist of 8 RNA segments. Genetic variation of hemagglutinin and/or neuraminidase genes results in the emergence of new influenza strains. The mechanism of variation can be the result of point mutations or the result of genetic reassortment between segments of two different strains.</text>
</comment>
<comment type="similarity">
    <text evidence="1">Belongs to the influenza viruses hemagglutinin family.</text>
</comment>
<proteinExistence type="inferred from homology"/>
<gene>
    <name evidence="1" type="primary">HA</name>
</gene>
<organism>
    <name type="scientific">Influenza A virus (strain A/Memphis/4/1980 H3N2)</name>
    <dbReference type="NCBI Taxonomy" id="383578"/>
    <lineage>
        <taxon>Viruses</taxon>
        <taxon>Riboviria</taxon>
        <taxon>Orthornavirae</taxon>
        <taxon>Negarnaviricota</taxon>
        <taxon>Polyploviricotina</taxon>
        <taxon>Insthoviricetes</taxon>
        <taxon>Articulavirales</taxon>
        <taxon>Orthomyxoviridae</taxon>
        <taxon>Alphainfluenzavirus</taxon>
        <taxon>Alphainfluenzavirus influenzae</taxon>
        <taxon>Influenza A virus</taxon>
    </lineage>
</organism>
<organismHost>
    <name type="scientific">Aves</name>
    <dbReference type="NCBI Taxonomy" id="8782"/>
</organismHost>
<organismHost>
    <name type="scientific">Cetacea</name>
    <name type="common">whales</name>
    <dbReference type="NCBI Taxonomy" id="9721"/>
</organismHost>
<organismHost>
    <name type="scientific">Homo sapiens</name>
    <name type="common">Human</name>
    <dbReference type="NCBI Taxonomy" id="9606"/>
</organismHost>
<organismHost>
    <name type="scientific">Phocidae</name>
    <name type="common">true seals</name>
    <dbReference type="NCBI Taxonomy" id="9709"/>
</organismHost>
<organismHost>
    <name type="scientific">Sus scrofa</name>
    <name type="common">Pig</name>
    <dbReference type="NCBI Taxonomy" id="9823"/>
</organismHost>
<protein>
    <recommendedName>
        <fullName evidence="1">Hemagglutinin</fullName>
    </recommendedName>
    <component>
        <recommendedName>
            <fullName evidence="1">Hemagglutinin HA1 chain</fullName>
        </recommendedName>
    </component>
    <component>
        <recommendedName>
            <fullName evidence="1">Hemagglutinin HA2 chain</fullName>
        </recommendedName>
    </component>
</protein>
<keyword id="KW-1167">Clathrin- and caveolin-independent endocytosis of virus by host</keyword>
<keyword id="KW-1165">Clathrin-mediated endocytosis of virus by host</keyword>
<keyword id="KW-1015">Disulfide bond</keyword>
<keyword id="KW-1170">Fusion of virus membrane with host endosomal membrane</keyword>
<keyword id="KW-1168">Fusion of virus membrane with host membrane</keyword>
<keyword id="KW-0325">Glycoprotein</keyword>
<keyword id="KW-0348">Hemagglutinin</keyword>
<keyword id="KW-1032">Host cell membrane</keyword>
<keyword id="KW-1043">Host membrane</keyword>
<keyword id="KW-0945">Host-virus interaction</keyword>
<keyword id="KW-0449">Lipoprotein</keyword>
<keyword id="KW-0472">Membrane</keyword>
<keyword id="KW-0564">Palmitate</keyword>
<keyword id="KW-0732">Signal</keyword>
<keyword id="KW-0812">Transmembrane</keyword>
<keyword id="KW-1133">Transmembrane helix</keyword>
<keyword id="KW-1161">Viral attachment to host cell</keyword>
<keyword id="KW-0261">Viral envelope protein</keyword>
<keyword id="KW-1162">Viral penetration into host cytoplasm</keyword>
<keyword id="KW-0946">Virion</keyword>
<keyword id="KW-1164">Virus endocytosis by host</keyword>
<keyword id="KW-1160">Virus entry into host cell</keyword>
<dbReference type="EMBL" id="CY007619">
    <property type="protein sequence ID" value="ABC46565.1"/>
    <property type="molecule type" value="Genomic_RNA"/>
</dbReference>
<dbReference type="SMR" id="Q2RCH5"/>
<dbReference type="GlyCosmos" id="Q2RCH5">
    <property type="glycosylation" value="8 sites, No reported glycans"/>
</dbReference>
<dbReference type="Proteomes" id="UP000008577">
    <property type="component" value="Genome"/>
</dbReference>
<dbReference type="GO" id="GO:0020002">
    <property type="term" value="C:host cell plasma membrane"/>
    <property type="evidence" value="ECO:0007669"/>
    <property type="project" value="UniProtKB-SubCell"/>
</dbReference>
<dbReference type="GO" id="GO:0016020">
    <property type="term" value="C:membrane"/>
    <property type="evidence" value="ECO:0007669"/>
    <property type="project" value="UniProtKB-UniRule"/>
</dbReference>
<dbReference type="GO" id="GO:0019031">
    <property type="term" value="C:viral envelope"/>
    <property type="evidence" value="ECO:0007669"/>
    <property type="project" value="UniProtKB-UniRule"/>
</dbReference>
<dbReference type="GO" id="GO:0055036">
    <property type="term" value="C:virion membrane"/>
    <property type="evidence" value="ECO:0007669"/>
    <property type="project" value="UniProtKB-SubCell"/>
</dbReference>
<dbReference type="GO" id="GO:0046789">
    <property type="term" value="F:host cell surface receptor binding"/>
    <property type="evidence" value="ECO:0007669"/>
    <property type="project" value="UniProtKB-UniRule"/>
</dbReference>
<dbReference type="GO" id="GO:0075512">
    <property type="term" value="P:clathrin-dependent endocytosis of virus by host cell"/>
    <property type="evidence" value="ECO:0007669"/>
    <property type="project" value="UniProtKB-UniRule"/>
</dbReference>
<dbReference type="GO" id="GO:0039654">
    <property type="term" value="P:fusion of virus membrane with host endosome membrane"/>
    <property type="evidence" value="ECO:0007669"/>
    <property type="project" value="UniProtKB-UniRule"/>
</dbReference>
<dbReference type="GO" id="GO:0019064">
    <property type="term" value="P:fusion of virus membrane with host plasma membrane"/>
    <property type="evidence" value="ECO:0007669"/>
    <property type="project" value="InterPro"/>
</dbReference>
<dbReference type="GO" id="GO:0046761">
    <property type="term" value="P:viral budding from plasma membrane"/>
    <property type="evidence" value="ECO:0007669"/>
    <property type="project" value="UniProtKB-UniRule"/>
</dbReference>
<dbReference type="GO" id="GO:0019062">
    <property type="term" value="P:virion attachment to host cell"/>
    <property type="evidence" value="ECO:0007669"/>
    <property type="project" value="UniProtKB-KW"/>
</dbReference>
<dbReference type="FunFam" id="3.90.20.10:FF:000001">
    <property type="entry name" value="Hemagglutinin"/>
    <property type="match status" value="1"/>
</dbReference>
<dbReference type="FunFam" id="3.90.209.20:FF:000001">
    <property type="entry name" value="Hemagglutinin"/>
    <property type="match status" value="1"/>
</dbReference>
<dbReference type="Gene3D" id="3.90.20.10">
    <property type="match status" value="1"/>
</dbReference>
<dbReference type="Gene3D" id="3.90.209.20">
    <property type="match status" value="1"/>
</dbReference>
<dbReference type="HAMAP" id="MF_04072">
    <property type="entry name" value="INFV_HEMA"/>
    <property type="match status" value="1"/>
</dbReference>
<dbReference type="InterPro" id="IPR008980">
    <property type="entry name" value="Capsid_hemagglutn"/>
</dbReference>
<dbReference type="InterPro" id="IPR013828">
    <property type="entry name" value="Hemagglutn_HA1_a/b_dom_sf"/>
</dbReference>
<dbReference type="InterPro" id="IPR000149">
    <property type="entry name" value="Hemagglutn_influenz_A"/>
</dbReference>
<dbReference type="InterPro" id="IPR001364">
    <property type="entry name" value="Hemagglutn_influenz_A/B"/>
</dbReference>
<dbReference type="Pfam" id="PF00509">
    <property type="entry name" value="Hemagglutinin"/>
    <property type="match status" value="1"/>
</dbReference>
<dbReference type="PRINTS" id="PR00330">
    <property type="entry name" value="HEMAGGLUTN1"/>
</dbReference>
<dbReference type="PRINTS" id="PR00329">
    <property type="entry name" value="HEMAGGLUTN12"/>
</dbReference>
<dbReference type="SUPFAM" id="SSF58064">
    <property type="entry name" value="Influenza hemagglutinin (stalk)"/>
    <property type="match status" value="1"/>
</dbReference>
<dbReference type="SUPFAM" id="SSF49818">
    <property type="entry name" value="Viral protein domain"/>
    <property type="match status" value="1"/>
</dbReference>
<evidence type="ECO:0000255" key="1">
    <source>
        <dbReference type="HAMAP-Rule" id="MF_04072"/>
    </source>
</evidence>
<evidence type="ECO:0000305" key="2"/>
<feature type="signal peptide" evidence="1">
    <location>
        <begin position="1"/>
        <end position="16"/>
    </location>
</feature>
<feature type="chain" id="PRO_0000440484" description="Hemagglutinin" evidence="1">
    <location>
        <begin position="17"/>
        <end position="566"/>
    </location>
</feature>
<feature type="chain" id="PRO_5000136248" description="Hemagglutinin HA1 chain">
    <location>
        <begin position="17"/>
        <end position="344"/>
    </location>
</feature>
<feature type="chain" id="PRO_5000136249" description="Hemagglutinin HA2 chain" evidence="1">
    <location>
        <begin position="346"/>
        <end position="566"/>
    </location>
</feature>
<feature type="topological domain" description="Extracellular" evidence="1">
    <location>
        <begin position="17"/>
        <end position="530"/>
    </location>
</feature>
<feature type="transmembrane region" description="Helical" evidence="1">
    <location>
        <begin position="531"/>
        <end position="551"/>
    </location>
</feature>
<feature type="topological domain" description="Cytoplasmic" evidence="1">
    <location>
        <begin position="552"/>
        <end position="566"/>
    </location>
</feature>
<feature type="site" description="Cleavage; by host" evidence="1">
    <location>
        <begin position="345"/>
        <end position="346"/>
    </location>
</feature>
<feature type="lipid moiety-binding region" description="S-palmitoyl cysteine; by host" evidence="1">
    <location>
        <position position="555"/>
    </location>
</feature>
<feature type="lipid moiety-binding region" description="S-palmitoyl cysteine; by host" evidence="1">
    <location>
        <position position="562"/>
    </location>
</feature>
<feature type="lipid moiety-binding region" description="S-palmitoyl cysteine; by host" evidence="1">
    <location>
        <position position="565"/>
    </location>
</feature>
<feature type="glycosylation site" description="N-linked (GlcNAc...) asparagine; by host" evidence="1">
    <location>
        <position position="38"/>
    </location>
</feature>
<feature type="glycosylation site" description="N-linked (GlcNAc...) asparagine; by host" evidence="1">
    <location>
        <position position="54"/>
    </location>
</feature>
<feature type="glycosylation site" description="N-linked (GlcNAc...) asparagine; by host" evidence="1">
    <location>
        <position position="79"/>
    </location>
</feature>
<feature type="glycosylation site" description="N-linked (GlcNAc...) asparagine; by host" evidence="1">
    <location>
        <position position="138"/>
    </location>
</feature>
<feature type="glycosylation site" description="N-linked (GlcNAc...) asparagine; by host" evidence="1">
    <location>
        <position position="142"/>
    </location>
</feature>
<feature type="glycosylation site" description="N-linked (GlcNAc...) asparagine; by host" evidence="1">
    <location>
        <position position="181"/>
    </location>
</feature>
<feature type="glycosylation site" description="N-linked (GlcNAc...) asparagine; by host" evidence="1">
    <location>
        <position position="301"/>
    </location>
</feature>
<feature type="glycosylation site" description="N-linked (GlcNAc...) asparagine; by host" evidence="1">
    <location>
        <position position="499"/>
    </location>
</feature>
<feature type="disulfide bond" description="Interchain (between HA1 and HA2 chains)" evidence="1">
    <location>
        <begin position="30"/>
        <end position="482"/>
    </location>
</feature>
<feature type="disulfide bond" evidence="1">
    <location>
        <begin position="68"/>
        <end position="293"/>
    </location>
</feature>
<feature type="disulfide bond" evidence="1">
    <location>
        <begin position="80"/>
        <end position="92"/>
    </location>
</feature>
<feature type="disulfide bond" evidence="1">
    <location>
        <begin position="113"/>
        <end position="155"/>
    </location>
</feature>
<feature type="disulfide bond" evidence="1">
    <location>
        <begin position="297"/>
        <end position="321"/>
    </location>
</feature>
<feature type="disulfide bond" evidence="1">
    <location>
        <begin position="489"/>
        <end position="493"/>
    </location>
</feature>
<name>HEMA_I80A4</name>
<sequence>MKTIIALSYIFCLVFAQNLPGNDKSTATLCLGHHAVPNGTLVKTITNDQIEVTNATELVQSSSTGRICDSPHRILDGKNCTLVDALLGDPHCDGFQNEKWDLFVERSKAFSNCYPYDVPDYASLRSLVASSGTLEFINESFNWTGVTQSGGSYACKRGSDNSFFSRLNWLYESESKYPVLNVTMPNNGNFDKLYIWGVHHPSTDKEQTNLYVRASGRVTVSTKRSQQTIIPNIGSRPWVRGLSSRISIYWTIVKPGDILLINSNGNLIAPRGYFKIRTGKSSIMRSDAPIGTCSSECITPNGSIPNDKPFQNVNKITYGACPKYVKQNTLKLATGMRNVPEKQTRGIFGAIAGFIENGWEGMVDGWYGFRHQNSEGTGQAADLKSTQAAIDQINGKLNRVIEKTNEKFHQIEKEFSEVEGRIQDLEKYVEDTKIDLWSYNAELLVALENQHTIDLTDSEMNKLFEKTRRQLRENAEDMGNGCFKIYHKCDNACIGSIRNGTYDHDVYRDEALNNRFQIKGVELKSGYKDWILWISFAISCFLLCVVLLGFIMWACQKGNIRCNICI</sequence>
<accession>Q2RCH5</accession>